<dbReference type="EMBL" id="U00096">
    <property type="protein sequence ID" value="AAC74800.2"/>
    <property type="molecule type" value="Genomic_DNA"/>
</dbReference>
<dbReference type="EMBL" id="AP009048">
    <property type="protein sequence ID" value="BAE76512.1"/>
    <property type="status" value="ALT_INIT"/>
    <property type="molecule type" value="Genomic_DNA"/>
</dbReference>
<dbReference type="PIR" id="B64932">
    <property type="entry name" value="B64932"/>
</dbReference>
<dbReference type="RefSeq" id="NP_416244.2">
    <property type="nucleotide sequence ID" value="NC_000913.3"/>
</dbReference>
<dbReference type="RefSeq" id="WP_001310874.1">
    <property type="nucleotide sequence ID" value="NZ_SSZK01000001.1"/>
</dbReference>
<dbReference type="BioGRID" id="4259135">
    <property type="interactions" value="115"/>
</dbReference>
<dbReference type="FunCoup" id="P76210">
    <property type="interactions" value="4"/>
</dbReference>
<dbReference type="IntAct" id="P76210">
    <property type="interactions" value="1"/>
</dbReference>
<dbReference type="STRING" id="511145.b1730"/>
<dbReference type="PaxDb" id="511145-b1730"/>
<dbReference type="EnsemblBacteria" id="AAC74800">
    <property type="protein sequence ID" value="AAC74800"/>
    <property type="gene ID" value="b1730"/>
</dbReference>
<dbReference type="GeneID" id="946237"/>
<dbReference type="KEGG" id="ecj:JW1719"/>
<dbReference type="KEGG" id="eco:b1730"/>
<dbReference type="KEGG" id="ecoc:C3026_09890"/>
<dbReference type="PATRIC" id="fig|511145.12.peg.1801"/>
<dbReference type="EchoBASE" id="EB3747"/>
<dbReference type="eggNOG" id="ENOG5033PDX">
    <property type="taxonomic scope" value="Bacteria"/>
</dbReference>
<dbReference type="HOGENOM" id="CLU_090955_0_0_6"/>
<dbReference type="InParanoid" id="P76210"/>
<dbReference type="BioCyc" id="EcoCyc:G6935-MONOMER"/>
<dbReference type="PRO" id="PR:P76210"/>
<dbReference type="Proteomes" id="UP000000625">
    <property type="component" value="Chromosome"/>
</dbReference>
<keyword id="KW-1185">Reference proteome</keyword>
<name>YDJO_ECOLI</name>
<reference key="1">
    <citation type="journal article" date="1997" name="Science">
        <title>The complete genome sequence of Escherichia coli K-12.</title>
        <authorList>
            <person name="Blattner F.R."/>
            <person name="Plunkett G. III"/>
            <person name="Bloch C.A."/>
            <person name="Perna N.T."/>
            <person name="Burland V."/>
            <person name="Riley M."/>
            <person name="Collado-Vides J."/>
            <person name="Glasner J.D."/>
            <person name="Rode C.K."/>
            <person name="Mayhew G.F."/>
            <person name="Gregor J."/>
            <person name="Davis N.W."/>
            <person name="Kirkpatrick H.A."/>
            <person name="Goeden M.A."/>
            <person name="Rose D.J."/>
            <person name="Mau B."/>
            <person name="Shao Y."/>
        </authorList>
    </citation>
    <scope>NUCLEOTIDE SEQUENCE [LARGE SCALE GENOMIC DNA]</scope>
    <source>
        <strain>K12 / MG1655 / ATCC 47076</strain>
    </source>
</reference>
<reference key="2">
    <citation type="journal article" date="2006" name="Mol. Syst. Biol.">
        <title>Highly accurate genome sequences of Escherichia coli K-12 strains MG1655 and W3110.</title>
        <authorList>
            <person name="Hayashi K."/>
            <person name="Morooka N."/>
            <person name="Yamamoto Y."/>
            <person name="Fujita K."/>
            <person name="Isono K."/>
            <person name="Choi S."/>
            <person name="Ohtsubo E."/>
            <person name="Baba T."/>
            <person name="Wanner B.L."/>
            <person name="Mori H."/>
            <person name="Horiuchi T."/>
        </authorList>
    </citation>
    <scope>NUCLEOTIDE SEQUENCE [LARGE SCALE GENOMIC DNA]</scope>
    <source>
        <strain>K12 / W3110 / ATCC 27325 / DSM 5911</strain>
    </source>
</reference>
<organism>
    <name type="scientific">Escherichia coli (strain K12)</name>
    <dbReference type="NCBI Taxonomy" id="83333"/>
    <lineage>
        <taxon>Bacteria</taxon>
        <taxon>Pseudomonadati</taxon>
        <taxon>Pseudomonadota</taxon>
        <taxon>Gammaproteobacteria</taxon>
        <taxon>Enterobacterales</taxon>
        <taxon>Enterobacteriaceae</taxon>
        <taxon>Escherichia</taxon>
    </lineage>
</organism>
<sequence>MFSTNLIQSNYGDLNIKSLAFDSFKERLQSTMTALTFFISTGQCDCDEIAESNFNYMIAYMSNINYDASKPGAPALSFDTYLQDNVKYRVIINNLYGSEIRIRGINKDFIGMDVTSVFRPEKMTNLISIKNRLVIHYLRTIYYEQNYIHPVGSIFAAIQKNESLLKFPSIISMLNINLLFNPLNLPGMGSGVLEDIMSIPDSSLRKRLGYEVLSFSLQAHSLSQECIDKLDIFFADDLFKYESVCIAAMEHLKSKATAPIQNGPLPA</sequence>
<feature type="chain" id="PRO_0000169005" description="Uncharacterized protein YdjO">
    <location>
        <begin position="1"/>
        <end position="267"/>
    </location>
</feature>
<proteinExistence type="predicted"/>
<accession>P76210</accession>
<accession>Q2MB44</accession>
<evidence type="ECO:0000305" key="1"/>
<protein>
    <recommendedName>
        <fullName>Uncharacterized protein YdjO</fullName>
    </recommendedName>
</protein>
<gene>
    <name type="primary">ydjO</name>
    <name type="ordered locus">b1730</name>
    <name type="ordered locus">JW1719</name>
</gene>
<comment type="sequence caution" evidence="1">
    <conflict type="erroneous initiation">
        <sequence resource="EMBL-CDS" id="BAE76512"/>
    </conflict>
</comment>